<organism>
    <name type="scientific">Pectobacterium carotovorum subsp. carotovorum (strain PC1)</name>
    <dbReference type="NCBI Taxonomy" id="561230"/>
    <lineage>
        <taxon>Bacteria</taxon>
        <taxon>Pseudomonadati</taxon>
        <taxon>Pseudomonadota</taxon>
        <taxon>Gammaproteobacteria</taxon>
        <taxon>Enterobacterales</taxon>
        <taxon>Pectobacteriaceae</taxon>
        <taxon>Pectobacterium</taxon>
    </lineage>
</organism>
<proteinExistence type="inferred from homology"/>
<keyword id="KW-0240">DNA-directed RNA polymerase</keyword>
<keyword id="KW-0548">Nucleotidyltransferase</keyword>
<keyword id="KW-0804">Transcription</keyword>
<keyword id="KW-0808">Transferase</keyword>
<reference key="1">
    <citation type="submission" date="2009-07" db="EMBL/GenBank/DDBJ databases">
        <title>Complete sequence of Pectobacterium carotovorum subsp. carotovorum PC1.</title>
        <authorList>
            <consortium name="US DOE Joint Genome Institute"/>
            <person name="Lucas S."/>
            <person name="Copeland A."/>
            <person name="Lapidus A."/>
            <person name="Glavina del Rio T."/>
            <person name="Tice H."/>
            <person name="Bruce D."/>
            <person name="Goodwin L."/>
            <person name="Pitluck S."/>
            <person name="Munk A.C."/>
            <person name="Brettin T."/>
            <person name="Detter J.C."/>
            <person name="Han C."/>
            <person name="Tapia R."/>
            <person name="Larimer F."/>
            <person name="Land M."/>
            <person name="Hauser L."/>
            <person name="Kyrpides N."/>
            <person name="Mikhailova N."/>
            <person name="Balakrishnan V."/>
            <person name="Glasner J."/>
            <person name="Perna N.T."/>
        </authorList>
    </citation>
    <scope>NUCLEOTIDE SEQUENCE [LARGE SCALE GENOMIC DNA]</scope>
    <source>
        <strain>PC1</strain>
    </source>
</reference>
<accession>C6DJC5</accession>
<comment type="function">
    <text evidence="1">Promotes RNA polymerase assembly. Latches the N- and C-terminal regions of the beta' subunit thereby facilitating its interaction with the beta and alpha subunits.</text>
</comment>
<comment type="catalytic activity">
    <reaction evidence="1">
        <text>RNA(n) + a ribonucleoside 5'-triphosphate = RNA(n+1) + diphosphate</text>
        <dbReference type="Rhea" id="RHEA:21248"/>
        <dbReference type="Rhea" id="RHEA-COMP:14527"/>
        <dbReference type="Rhea" id="RHEA-COMP:17342"/>
        <dbReference type="ChEBI" id="CHEBI:33019"/>
        <dbReference type="ChEBI" id="CHEBI:61557"/>
        <dbReference type="ChEBI" id="CHEBI:140395"/>
        <dbReference type="EC" id="2.7.7.6"/>
    </reaction>
</comment>
<comment type="subunit">
    <text evidence="1">The RNAP catalytic core consists of 2 alpha, 1 beta, 1 beta' and 1 omega subunit. When a sigma factor is associated with the core the holoenzyme is formed, which can initiate transcription.</text>
</comment>
<comment type="similarity">
    <text evidence="1">Belongs to the RNA polymerase subunit omega family.</text>
</comment>
<feature type="chain" id="PRO_1000205524" description="DNA-directed RNA polymerase subunit omega">
    <location>
        <begin position="1"/>
        <end position="91"/>
    </location>
</feature>
<evidence type="ECO:0000255" key="1">
    <source>
        <dbReference type="HAMAP-Rule" id="MF_00366"/>
    </source>
</evidence>
<sequence length="91" mass="10269">MARVTVQDAVEKIGNRFDLVLVAARRARQIQTGGKDPLVPEENDKYTVIALREIEEGLINNQILDVRDRQEQQEQEAAEIQAVTAIAEGRR</sequence>
<name>RPOZ_PECCP</name>
<protein>
    <recommendedName>
        <fullName evidence="1">DNA-directed RNA polymerase subunit omega</fullName>
        <shortName evidence="1">RNAP omega subunit</shortName>
        <ecNumber evidence="1">2.7.7.6</ecNumber>
    </recommendedName>
    <alternativeName>
        <fullName evidence="1">RNA polymerase omega subunit</fullName>
    </alternativeName>
    <alternativeName>
        <fullName evidence="1">Transcriptase subunit omega</fullName>
    </alternativeName>
</protein>
<gene>
    <name evidence="1" type="primary">rpoZ</name>
    <name type="ordered locus">PC1_4210</name>
</gene>
<dbReference type="EC" id="2.7.7.6" evidence="1"/>
<dbReference type="EMBL" id="CP001657">
    <property type="protein sequence ID" value="ACT15224.1"/>
    <property type="molecule type" value="Genomic_DNA"/>
</dbReference>
<dbReference type="RefSeq" id="WP_005968230.1">
    <property type="nucleotide sequence ID" value="NC_012917.1"/>
</dbReference>
<dbReference type="SMR" id="C6DJC5"/>
<dbReference type="STRING" id="561230.PC1_4210"/>
<dbReference type="GeneID" id="90769336"/>
<dbReference type="KEGG" id="pct:PC1_4210"/>
<dbReference type="eggNOG" id="COG1758">
    <property type="taxonomic scope" value="Bacteria"/>
</dbReference>
<dbReference type="HOGENOM" id="CLU_125406_5_3_6"/>
<dbReference type="OrthoDB" id="9796300at2"/>
<dbReference type="Proteomes" id="UP000002736">
    <property type="component" value="Chromosome"/>
</dbReference>
<dbReference type="GO" id="GO:0000428">
    <property type="term" value="C:DNA-directed RNA polymerase complex"/>
    <property type="evidence" value="ECO:0007669"/>
    <property type="project" value="UniProtKB-KW"/>
</dbReference>
<dbReference type="GO" id="GO:0003677">
    <property type="term" value="F:DNA binding"/>
    <property type="evidence" value="ECO:0007669"/>
    <property type="project" value="UniProtKB-UniRule"/>
</dbReference>
<dbReference type="GO" id="GO:0003899">
    <property type="term" value="F:DNA-directed RNA polymerase activity"/>
    <property type="evidence" value="ECO:0007669"/>
    <property type="project" value="UniProtKB-UniRule"/>
</dbReference>
<dbReference type="GO" id="GO:0006351">
    <property type="term" value="P:DNA-templated transcription"/>
    <property type="evidence" value="ECO:0007669"/>
    <property type="project" value="UniProtKB-UniRule"/>
</dbReference>
<dbReference type="FunFam" id="3.90.940.10:FF:000001">
    <property type="entry name" value="DNA-directed RNA polymerase subunit omega"/>
    <property type="match status" value="1"/>
</dbReference>
<dbReference type="Gene3D" id="3.90.940.10">
    <property type="match status" value="1"/>
</dbReference>
<dbReference type="HAMAP" id="MF_00366">
    <property type="entry name" value="RNApol_bact_RpoZ"/>
    <property type="match status" value="1"/>
</dbReference>
<dbReference type="InterPro" id="IPR003716">
    <property type="entry name" value="DNA-dir_RNA_pol_omega"/>
</dbReference>
<dbReference type="InterPro" id="IPR006110">
    <property type="entry name" value="Pol_omega/Rpo6/RPB6"/>
</dbReference>
<dbReference type="InterPro" id="IPR036161">
    <property type="entry name" value="RPB6/omega-like_sf"/>
</dbReference>
<dbReference type="NCBIfam" id="TIGR00690">
    <property type="entry name" value="rpoZ"/>
    <property type="match status" value="1"/>
</dbReference>
<dbReference type="PANTHER" id="PTHR34476">
    <property type="entry name" value="DNA-DIRECTED RNA POLYMERASE SUBUNIT OMEGA"/>
    <property type="match status" value="1"/>
</dbReference>
<dbReference type="PANTHER" id="PTHR34476:SF1">
    <property type="entry name" value="DNA-DIRECTED RNA POLYMERASE SUBUNIT OMEGA"/>
    <property type="match status" value="1"/>
</dbReference>
<dbReference type="Pfam" id="PF01192">
    <property type="entry name" value="RNA_pol_Rpb6"/>
    <property type="match status" value="1"/>
</dbReference>
<dbReference type="SMART" id="SM01409">
    <property type="entry name" value="RNA_pol_Rpb6"/>
    <property type="match status" value="1"/>
</dbReference>
<dbReference type="SUPFAM" id="SSF63562">
    <property type="entry name" value="RPB6/omega subunit-like"/>
    <property type="match status" value="1"/>
</dbReference>